<reference key="1">
    <citation type="journal article" date="2011" name="J. Bacteriol.">
        <title>Complete genome sequence of the metabolically versatile plant growth-promoting endophyte, Variovorax paradoxus S110.</title>
        <authorList>
            <person name="Han J.I."/>
            <person name="Choi H.K."/>
            <person name="Lee S.W."/>
            <person name="Orwin P.M."/>
            <person name="Kim J."/>
            <person name="Laroe S.L."/>
            <person name="Kim T.G."/>
            <person name="O'Neil J."/>
            <person name="Leadbetter J.R."/>
            <person name="Lee S.Y."/>
            <person name="Hur C.G."/>
            <person name="Spain J.C."/>
            <person name="Ovchinnikova G."/>
            <person name="Goodwin L."/>
            <person name="Han C."/>
        </authorList>
    </citation>
    <scope>NUCLEOTIDE SEQUENCE [LARGE SCALE GENOMIC DNA]</scope>
    <source>
        <strain>S110</strain>
    </source>
</reference>
<dbReference type="EC" id="3.5.-.-" evidence="1"/>
<dbReference type="EMBL" id="CP001635">
    <property type="protein sequence ID" value="ACS21444.1"/>
    <property type="molecule type" value="Genomic_DNA"/>
</dbReference>
<dbReference type="SMR" id="C5CN81"/>
<dbReference type="STRING" id="543728.Vapar_4840"/>
<dbReference type="KEGG" id="vap:Vapar_4840"/>
<dbReference type="eggNOG" id="COG0251">
    <property type="taxonomic scope" value="Bacteria"/>
</dbReference>
<dbReference type="HOGENOM" id="CLU_100715_7_1_4"/>
<dbReference type="OrthoDB" id="8655901at2"/>
<dbReference type="GO" id="GO:0005829">
    <property type="term" value="C:cytosol"/>
    <property type="evidence" value="ECO:0007669"/>
    <property type="project" value="TreeGrafter"/>
</dbReference>
<dbReference type="GO" id="GO:0019239">
    <property type="term" value="F:deaminase activity"/>
    <property type="evidence" value="ECO:0007669"/>
    <property type="project" value="TreeGrafter"/>
</dbReference>
<dbReference type="GO" id="GO:0019740">
    <property type="term" value="P:nitrogen utilization"/>
    <property type="evidence" value="ECO:0007669"/>
    <property type="project" value="UniProtKB-UniRule"/>
</dbReference>
<dbReference type="GO" id="GO:0006212">
    <property type="term" value="P:uracil catabolic process"/>
    <property type="evidence" value="ECO:0007669"/>
    <property type="project" value="UniProtKB-UniRule"/>
</dbReference>
<dbReference type="CDD" id="cd00448">
    <property type="entry name" value="YjgF_YER057c_UK114_family"/>
    <property type="match status" value="1"/>
</dbReference>
<dbReference type="Gene3D" id="3.30.1330.40">
    <property type="entry name" value="RutC-like"/>
    <property type="match status" value="1"/>
</dbReference>
<dbReference type="HAMAP" id="MF_00831">
    <property type="entry name" value="RutC"/>
    <property type="match status" value="1"/>
</dbReference>
<dbReference type="InterPro" id="IPR019898">
    <property type="entry name" value="RutC"/>
</dbReference>
<dbReference type="InterPro" id="IPR035959">
    <property type="entry name" value="RutC-like_sf"/>
</dbReference>
<dbReference type="InterPro" id="IPR006175">
    <property type="entry name" value="YjgF/YER057c/UK114"/>
</dbReference>
<dbReference type="NCBIfam" id="TIGR03610">
    <property type="entry name" value="RutC"/>
    <property type="match status" value="1"/>
</dbReference>
<dbReference type="PANTHER" id="PTHR11803">
    <property type="entry name" value="2-IMINOBUTANOATE/2-IMINOPROPANOATE DEAMINASE RIDA"/>
    <property type="match status" value="1"/>
</dbReference>
<dbReference type="PANTHER" id="PTHR11803:SF58">
    <property type="entry name" value="PROTEIN HMF1-RELATED"/>
    <property type="match status" value="1"/>
</dbReference>
<dbReference type="Pfam" id="PF01042">
    <property type="entry name" value="Ribonuc_L-PSP"/>
    <property type="match status" value="1"/>
</dbReference>
<dbReference type="SUPFAM" id="SSF55298">
    <property type="entry name" value="YjgF-like"/>
    <property type="match status" value="1"/>
</dbReference>
<comment type="function">
    <text evidence="1">Involved in pyrimidine catabolism. Catalyzes the deamination of 3-aminoacrylate to malonic semialdehyde, a reaction that can also occur spontaneously. RutC may facilitate the reaction and modulate the metabolic fitness, rather than catalyzing essential functions.</text>
</comment>
<comment type="catalytic activity">
    <reaction evidence="1">
        <text>(Z)-3-aminoacrylate + H2O + H(+) = 3-oxopropanoate + NH4(+)</text>
        <dbReference type="Rhea" id="RHEA:34947"/>
        <dbReference type="ChEBI" id="CHEBI:15377"/>
        <dbReference type="ChEBI" id="CHEBI:15378"/>
        <dbReference type="ChEBI" id="CHEBI:28938"/>
        <dbReference type="ChEBI" id="CHEBI:33190"/>
        <dbReference type="ChEBI" id="CHEBI:59894"/>
    </reaction>
</comment>
<comment type="similarity">
    <text evidence="1">Belongs to the RutC family.</text>
</comment>
<sequence length="130" mass="13808">MPKQAIIPAGTTTPIAPFVPGTMADGIVYVSGTLPFDKDNNVVHVGDASAQTRHVLETIQNVIATAGGTMDDVTFNMIMIKDWADYAKVNAVYAEFFPGTKPARYCIQCGLVKPDALVEIASIAHVGNKA</sequence>
<protein>
    <recommendedName>
        <fullName evidence="1">3-aminoacrylate deaminase RutC</fullName>
        <shortName evidence="1">3-AA deaminase</shortName>
        <ecNumber evidence="1">3.5.-.-</ecNumber>
    </recommendedName>
</protein>
<feature type="chain" id="PRO_0000402769" description="3-aminoacrylate deaminase RutC">
    <location>
        <begin position="1"/>
        <end position="130"/>
    </location>
</feature>
<proteinExistence type="inferred from homology"/>
<accession>C5CN81</accession>
<gene>
    <name evidence="1" type="primary">rutC</name>
    <name type="ordered locus">Vapar_4840</name>
</gene>
<name>RUTC_VARPS</name>
<evidence type="ECO:0000255" key="1">
    <source>
        <dbReference type="HAMAP-Rule" id="MF_00831"/>
    </source>
</evidence>
<organism>
    <name type="scientific">Variovorax paradoxus (strain S110)</name>
    <dbReference type="NCBI Taxonomy" id="543728"/>
    <lineage>
        <taxon>Bacteria</taxon>
        <taxon>Pseudomonadati</taxon>
        <taxon>Pseudomonadota</taxon>
        <taxon>Betaproteobacteria</taxon>
        <taxon>Burkholderiales</taxon>
        <taxon>Comamonadaceae</taxon>
        <taxon>Variovorax</taxon>
    </lineage>
</organism>
<keyword id="KW-0378">Hydrolase</keyword>